<organism>
    <name type="scientific">Thermodesulfovibrio yellowstonii (strain ATCC 51303 / DSM 11347 / YP87)</name>
    <dbReference type="NCBI Taxonomy" id="289376"/>
    <lineage>
        <taxon>Bacteria</taxon>
        <taxon>Pseudomonadati</taxon>
        <taxon>Nitrospirota</taxon>
        <taxon>Thermodesulfovibrionia</taxon>
        <taxon>Thermodesulfovibrionales</taxon>
        <taxon>Thermodesulfovibrionaceae</taxon>
        <taxon>Thermodesulfovibrio</taxon>
    </lineage>
</organism>
<name>ISPG_THEYD</name>
<dbReference type="EC" id="1.17.7.3" evidence="1"/>
<dbReference type="EMBL" id="CP001147">
    <property type="protein sequence ID" value="ACI21603.1"/>
    <property type="molecule type" value="Genomic_DNA"/>
</dbReference>
<dbReference type="RefSeq" id="WP_012546314.1">
    <property type="nucleotide sequence ID" value="NC_011296.1"/>
</dbReference>
<dbReference type="RefSeq" id="YP_002248213.1">
    <property type="nucleotide sequence ID" value="NC_011296.1"/>
</dbReference>
<dbReference type="SMR" id="B5YIQ4"/>
<dbReference type="FunCoup" id="B5YIQ4">
    <property type="interactions" value="302"/>
</dbReference>
<dbReference type="STRING" id="289376.THEYE_A0366"/>
<dbReference type="EnsemblBacteria" id="ACI21603">
    <property type="protein sequence ID" value="ACI21603"/>
    <property type="gene ID" value="THEYE_A0366"/>
</dbReference>
<dbReference type="KEGG" id="tye:THEYE_A0366"/>
<dbReference type="PATRIC" id="fig|289376.4.peg.359"/>
<dbReference type="eggNOG" id="COG0821">
    <property type="taxonomic scope" value="Bacteria"/>
</dbReference>
<dbReference type="HOGENOM" id="CLU_042258_0_0_0"/>
<dbReference type="InParanoid" id="B5YIQ4"/>
<dbReference type="OrthoDB" id="9803214at2"/>
<dbReference type="UniPathway" id="UPA00056">
    <property type="reaction ID" value="UER00096"/>
</dbReference>
<dbReference type="Proteomes" id="UP000000718">
    <property type="component" value="Chromosome"/>
</dbReference>
<dbReference type="GO" id="GO:0051539">
    <property type="term" value="F:4 iron, 4 sulfur cluster binding"/>
    <property type="evidence" value="ECO:0007669"/>
    <property type="project" value="UniProtKB-UniRule"/>
</dbReference>
<dbReference type="GO" id="GO:0046429">
    <property type="term" value="F:4-hydroxy-3-methylbut-2-en-1-yl diphosphate synthase activity (ferredoxin)"/>
    <property type="evidence" value="ECO:0000318"/>
    <property type="project" value="GO_Central"/>
</dbReference>
<dbReference type="GO" id="GO:0141197">
    <property type="term" value="F:4-hydroxy-3-methylbut-2-enyl-diphosphate synthase activity (flavodoxin)"/>
    <property type="evidence" value="ECO:0007669"/>
    <property type="project" value="UniProtKB-EC"/>
</dbReference>
<dbReference type="GO" id="GO:0005506">
    <property type="term" value="F:iron ion binding"/>
    <property type="evidence" value="ECO:0007669"/>
    <property type="project" value="InterPro"/>
</dbReference>
<dbReference type="GO" id="GO:0019288">
    <property type="term" value="P:isopentenyl diphosphate biosynthetic process, methylerythritol 4-phosphate pathway"/>
    <property type="evidence" value="ECO:0000318"/>
    <property type="project" value="GO_Central"/>
</dbReference>
<dbReference type="GO" id="GO:0016114">
    <property type="term" value="P:terpenoid biosynthetic process"/>
    <property type="evidence" value="ECO:0007669"/>
    <property type="project" value="InterPro"/>
</dbReference>
<dbReference type="FunFam" id="3.20.20.20:FF:000001">
    <property type="entry name" value="4-hydroxy-3-methylbut-2-en-1-yl diphosphate synthase (flavodoxin)"/>
    <property type="match status" value="1"/>
</dbReference>
<dbReference type="Gene3D" id="3.20.20.20">
    <property type="entry name" value="Dihydropteroate synthase-like"/>
    <property type="match status" value="1"/>
</dbReference>
<dbReference type="Gene3D" id="3.30.413.10">
    <property type="entry name" value="Sulfite Reductase Hemoprotein, domain 1"/>
    <property type="match status" value="1"/>
</dbReference>
<dbReference type="HAMAP" id="MF_00159">
    <property type="entry name" value="IspG"/>
    <property type="match status" value="1"/>
</dbReference>
<dbReference type="InterPro" id="IPR011005">
    <property type="entry name" value="Dihydropteroate_synth-like_sf"/>
</dbReference>
<dbReference type="InterPro" id="IPR016425">
    <property type="entry name" value="IspG_bac"/>
</dbReference>
<dbReference type="InterPro" id="IPR004588">
    <property type="entry name" value="IspG_bac-typ"/>
</dbReference>
<dbReference type="InterPro" id="IPR045854">
    <property type="entry name" value="NO2/SO3_Rdtase_4Fe4S_sf"/>
</dbReference>
<dbReference type="NCBIfam" id="TIGR00612">
    <property type="entry name" value="ispG_gcpE"/>
    <property type="match status" value="1"/>
</dbReference>
<dbReference type="NCBIfam" id="NF001540">
    <property type="entry name" value="PRK00366.1"/>
    <property type="match status" value="1"/>
</dbReference>
<dbReference type="PANTHER" id="PTHR30454">
    <property type="entry name" value="4-HYDROXY-3-METHYLBUT-2-EN-1-YL DIPHOSPHATE SYNTHASE"/>
    <property type="match status" value="1"/>
</dbReference>
<dbReference type="PANTHER" id="PTHR30454:SF0">
    <property type="entry name" value="4-HYDROXY-3-METHYLBUT-2-EN-1-YL DIPHOSPHATE SYNTHASE (FERREDOXIN), CHLOROPLASTIC"/>
    <property type="match status" value="1"/>
</dbReference>
<dbReference type="Pfam" id="PF04551">
    <property type="entry name" value="GcpE"/>
    <property type="match status" value="1"/>
</dbReference>
<dbReference type="PIRSF" id="PIRSF004640">
    <property type="entry name" value="IspG"/>
    <property type="match status" value="1"/>
</dbReference>
<dbReference type="SUPFAM" id="SSF51412">
    <property type="entry name" value="Inosine monophosphate dehydrogenase (IMPDH)"/>
    <property type="match status" value="1"/>
</dbReference>
<dbReference type="SUPFAM" id="SSF56014">
    <property type="entry name" value="Nitrite and sulphite reductase 4Fe-4S domain-like"/>
    <property type="match status" value="1"/>
</dbReference>
<protein>
    <recommendedName>
        <fullName evidence="1">4-hydroxy-3-methylbut-2-en-1-yl diphosphate synthase (flavodoxin)</fullName>
        <ecNumber evidence="1">1.17.7.3</ecNumber>
    </recommendedName>
    <alternativeName>
        <fullName evidence="1">1-hydroxy-2-methyl-2-(E)-butenyl 4-diphosphate synthase</fullName>
    </alternativeName>
</protein>
<comment type="function">
    <text evidence="1">Converts 2C-methyl-D-erythritol 2,4-cyclodiphosphate (ME-2,4cPP) into 1-hydroxy-2-methyl-2-(E)-butenyl 4-diphosphate.</text>
</comment>
<comment type="catalytic activity">
    <reaction evidence="1">
        <text>(2E)-4-hydroxy-3-methylbut-2-enyl diphosphate + oxidized [flavodoxin] + H2O + 2 H(+) = 2-C-methyl-D-erythritol 2,4-cyclic diphosphate + reduced [flavodoxin]</text>
        <dbReference type="Rhea" id="RHEA:43604"/>
        <dbReference type="Rhea" id="RHEA-COMP:10622"/>
        <dbReference type="Rhea" id="RHEA-COMP:10623"/>
        <dbReference type="ChEBI" id="CHEBI:15377"/>
        <dbReference type="ChEBI" id="CHEBI:15378"/>
        <dbReference type="ChEBI" id="CHEBI:57618"/>
        <dbReference type="ChEBI" id="CHEBI:58210"/>
        <dbReference type="ChEBI" id="CHEBI:58483"/>
        <dbReference type="ChEBI" id="CHEBI:128753"/>
        <dbReference type="EC" id="1.17.7.3"/>
    </reaction>
</comment>
<comment type="cofactor">
    <cofactor evidence="1">
        <name>[4Fe-4S] cluster</name>
        <dbReference type="ChEBI" id="CHEBI:49883"/>
    </cofactor>
    <text evidence="1">Binds 1 [4Fe-4S] cluster.</text>
</comment>
<comment type="pathway">
    <text evidence="1">Isoprenoid biosynthesis; isopentenyl diphosphate biosynthesis via DXP pathway; isopentenyl diphosphate from 1-deoxy-D-xylulose 5-phosphate: step 5/6.</text>
</comment>
<comment type="similarity">
    <text evidence="1">Belongs to the IspG family.</text>
</comment>
<accession>B5YIQ4</accession>
<feature type="chain" id="PRO_1000097193" description="4-hydroxy-3-methylbut-2-en-1-yl diphosphate synthase (flavodoxin)">
    <location>
        <begin position="1"/>
        <end position="349"/>
    </location>
</feature>
<feature type="binding site" evidence="1">
    <location>
        <position position="265"/>
    </location>
    <ligand>
        <name>[4Fe-4S] cluster</name>
        <dbReference type="ChEBI" id="CHEBI:49883"/>
    </ligand>
</feature>
<feature type="binding site" evidence="1">
    <location>
        <position position="268"/>
    </location>
    <ligand>
        <name>[4Fe-4S] cluster</name>
        <dbReference type="ChEBI" id="CHEBI:49883"/>
    </ligand>
</feature>
<feature type="binding site" evidence="1">
    <location>
        <position position="300"/>
    </location>
    <ligand>
        <name>[4Fe-4S] cluster</name>
        <dbReference type="ChEBI" id="CHEBI:49883"/>
    </ligand>
</feature>
<feature type="binding site" evidence="1">
    <location>
        <position position="307"/>
    </location>
    <ligand>
        <name>[4Fe-4S] cluster</name>
        <dbReference type="ChEBI" id="CHEBI:49883"/>
    </ligand>
</feature>
<sequence>MIKRRQTRRIYVGGVSIGDGAPVRVQSMTKTDTRNIKATIRQIKQLELAGCEIVRVAVPDITAAKVLGEIKKRIKIPMIADIHFNYKLALEAIKQGVDGLRINPGNIGAKWKVREVITAAKDRKIPIRIGVNAGSLPKDLIEKYGHPTHEAMVEAAERHIEILEELDFHDIKVSLKASDVMKTVEAYRLFSSKHDYPLHIGITETGPVPEGVVKSSIGIGLLLLEGIGDTIRVSLTDSPVVEVNVAYEILRVTGFREKGVEIISCPTCGRCEVNIKKMVKQVKNALRNVKEPIKVAVMGCSVNGPGEAKEADFGIAGGKGQGIVFVKGKILKTVKETELVNALIEEIRK</sequence>
<keyword id="KW-0004">4Fe-4S</keyword>
<keyword id="KW-0408">Iron</keyword>
<keyword id="KW-0411">Iron-sulfur</keyword>
<keyword id="KW-0414">Isoprene biosynthesis</keyword>
<keyword id="KW-0479">Metal-binding</keyword>
<keyword id="KW-0560">Oxidoreductase</keyword>
<keyword id="KW-1185">Reference proteome</keyword>
<proteinExistence type="inferred from homology"/>
<evidence type="ECO:0000255" key="1">
    <source>
        <dbReference type="HAMAP-Rule" id="MF_00159"/>
    </source>
</evidence>
<gene>
    <name evidence="1" type="primary">ispG</name>
    <name type="ordered locus">THEYE_A0366</name>
</gene>
<reference key="1">
    <citation type="submission" date="2008-08" db="EMBL/GenBank/DDBJ databases">
        <title>The complete genome sequence of Thermodesulfovibrio yellowstonii strain ATCC 51303 / DSM 11347 / YP87.</title>
        <authorList>
            <person name="Dodson R.J."/>
            <person name="Durkin A.S."/>
            <person name="Wu M."/>
            <person name="Eisen J."/>
            <person name="Sutton G."/>
        </authorList>
    </citation>
    <scope>NUCLEOTIDE SEQUENCE [LARGE SCALE GENOMIC DNA]</scope>
    <source>
        <strain>ATCC 51303 / DSM 11347 / YP87</strain>
    </source>
</reference>